<keyword id="KW-1015">Disulfide bond</keyword>
<keyword id="KW-0325">Glycoprotein</keyword>
<keyword id="KW-0964">Secreted</keyword>
<keyword id="KW-0732">Signal</keyword>
<name>E1078_IXORI</name>
<protein>
    <recommendedName>
        <fullName evidence="5">Evasin P1078</fullName>
    </recommendedName>
</protein>
<organism evidence="7">
    <name type="scientific">Ixodes ricinus</name>
    <name type="common">Common tick</name>
    <name type="synonym">Acarus ricinus</name>
    <dbReference type="NCBI Taxonomy" id="34613"/>
    <lineage>
        <taxon>Eukaryota</taxon>
        <taxon>Metazoa</taxon>
        <taxon>Ecdysozoa</taxon>
        <taxon>Arthropoda</taxon>
        <taxon>Chelicerata</taxon>
        <taxon>Arachnida</taxon>
        <taxon>Acari</taxon>
        <taxon>Parasitiformes</taxon>
        <taxon>Ixodida</taxon>
        <taxon>Ixodoidea</taxon>
        <taxon>Ixodidae</taxon>
        <taxon>Ixodinae</taxon>
        <taxon>Ixodes</taxon>
    </lineage>
</organism>
<reference evidence="7" key="1">
    <citation type="journal article" date="2013" name="FASEB J.">
        <title>De novo Ixodes ricinus salivary gland transcriptome analysis using two next-generation sequencing methodologies.</title>
        <authorList>
            <person name="Schwarz A."/>
            <person name="von Reumont B.M."/>
            <person name="Erhart J."/>
            <person name="Chagas A.C."/>
            <person name="Ribeiro J.M."/>
            <person name="Kotsyfakis M."/>
        </authorList>
    </citation>
    <scope>NUCLEOTIDE SEQUENCE [LARGE SCALE MRNA]</scope>
    <source>
        <tissue evidence="7">Salivary gland</tissue>
    </source>
</reference>
<reference evidence="6" key="2">
    <citation type="journal article" date="2019" name="J. Biol. Chem.">
        <title>A knottin scaffold directs the CXC-chemokine-binding specificity of tick evasins.</title>
        <authorList>
            <person name="Lee A.W."/>
            <person name="Deruaz M."/>
            <person name="Lynch C."/>
            <person name="Davies G."/>
            <person name="Singh K."/>
            <person name="Alenazi Y."/>
            <person name="Eaton J.R.O."/>
            <person name="Kawamura A."/>
            <person name="Shaw J."/>
            <person name="Proudfoot A.E.I."/>
            <person name="Dias J.M."/>
            <person name="Bhattacharya S."/>
        </authorList>
    </citation>
    <scope>FUNCTION</scope>
</reference>
<sequence length="96" mass="10500">MAFNTITFLQWAVFVAILFNMNLHSASAGSKGSSAQQSSHDSIKAEFCETNCTMKTGGKWTQCHGGCFCVHVGNETVGRCIKLDGDYDYPSSKHEE</sequence>
<dbReference type="EMBL" id="GADI01007524">
    <property type="protein sequence ID" value="JAA66284.1"/>
    <property type="molecule type" value="mRNA"/>
</dbReference>
<dbReference type="SMR" id="A0A0K8R726"/>
<dbReference type="GO" id="GO:0005576">
    <property type="term" value="C:extracellular region"/>
    <property type="evidence" value="ECO:0007669"/>
    <property type="project" value="UniProtKB-SubCell"/>
</dbReference>
<dbReference type="GO" id="GO:0019958">
    <property type="term" value="F:C-X-C chemokine binding"/>
    <property type="evidence" value="ECO:0000314"/>
    <property type="project" value="UniProtKB"/>
</dbReference>
<comment type="function">
    <text evidence="4">Salivary chemokine-binding protein which binds to host chemokines CXCL1, CXCL2, CXCL3, CXCL5, CXCL6, CXCL11 and CXCL13.</text>
</comment>
<comment type="subcellular location">
    <subcellularLocation>
        <location evidence="6">Secreted</location>
    </subcellularLocation>
</comment>
<proteinExistence type="inferred from homology"/>
<evidence type="ECO:0000250" key="1">
    <source>
        <dbReference type="UniProtKB" id="P0C8E8"/>
    </source>
</evidence>
<evidence type="ECO:0000255" key="2"/>
<evidence type="ECO:0000255" key="3">
    <source>
        <dbReference type="PROSITE-ProRule" id="PRU00498"/>
    </source>
</evidence>
<evidence type="ECO:0000269" key="4">
    <source>
    </source>
</evidence>
<evidence type="ECO:0000303" key="5">
    <source>
    </source>
</evidence>
<evidence type="ECO:0000305" key="6"/>
<evidence type="ECO:0000312" key="7">
    <source>
        <dbReference type="EMBL" id="JAA66284.1"/>
    </source>
</evidence>
<feature type="signal peptide" evidence="2">
    <location>
        <begin position="1"/>
        <end position="28"/>
    </location>
</feature>
<feature type="chain" id="PRO_5005516533" description="Evasin P1078" evidence="2">
    <location>
        <begin position="29"/>
        <end position="96"/>
    </location>
</feature>
<feature type="glycosylation site" description="N-linked (GlcNAc...) asparagine" evidence="3">
    <location>
        <position position="51"/>
    </location>
</feature>
<feature type="glycosylation site" description="N-linked (GlcNAc...) asparagine" evidence="3">
    <location>
        <position position="74"/>
    </location>
</feature>
<feature type="disulfide bond" evidence="1">
    <location>
        <begin position="48"/>
        <end position="67"/>
    </location>
</feature>
<feature type="disulfide bond" evidence="1">
    <location>
        <begin position="52"/>
        <end position="69"/>
    </location>
</feature>
<feature type="disulfide bond" evidence="1">
    <location>
        <begin position="63"/>
        <end position="80"/>
    </location>
</feature>
<accession>A0A0K8R726</accession>